<feature type="chain" id="PRO_0000201201" description="Acyl-coenzyme A dehydrogenase">
    <location>
        <begin position="1"/>
        <end position="814"/>
    </location>
</feature>
<feature type="active site" description="Proton acceptor" evidence="1">
    <location>
        <position position="497"/>
    </location>
</feature>
<protein>
    <recommendedName>
        <fullName evidence="2">Acyl-coenzyme A dehydrogenase</fullName>
        <shortName>ACDH</shortName>
        <shortName evidence="2">Acyl-CoA dehydrogenase</shortName>
        <ecNumber evidence="2">1.3.8.7</ecNumber>
        <ecNumber evidence="2">1.3.8.8</ecNumber>
    </recommendedName>
</protein>
<organism>
    <name type="scientific">Escherichia coli O157:H7</name>
    <dbReference type="NCBI Taxonomy" id="83334"/>
    <lineage>
        <taxon>Bacteria</taxon>
        <taxon>Pseudomonadati</taxon>
        <taxon>Pseudomonadota</taxon>
        <taxon>Gammaproteobacteria</taxon>
        <taxon>Enterobacterales</taxon>
        <taxon>Enterobacteriaceae</taxon>
        <taxon>Escherichia</taxon>
    </lineage>
</organism>
<name>FADE_ECO57</name>
<keyword id="KW-0274">FAD</keyword>
<keyword id="KW-0276">Fatty acid metabolism</keyword>
<keyword id="KW-0285">Flavoprotein</keyword>
<keyword id="KW-0443">Lipid metabolism</keyword>
<keyword id="KW-0560">Oxidoreductase</keyword>
<keyword id="KW-1185">Reference proteome</keyword>
<reference key="1">
    <citation type="journal article" date="2001" name="Nature">
        <title>Genome sequence of enterohaemorrhagic Escherichia coli O157:H7.</title>
        <authorList>
            <person name="Perna N.T."/>
            <person name="Plunkett G. III"/>
            <person name="Burland V."/>
            <person name="Mau B."/>
            <person name="Glasner J.D."/>
            <person name="Rose D.J."/>
            <person name="Mayhew G.F."/>
            <person name="Evans P.S."/>
            <person name="Gregor J."/>
            <person name="Kirkpatrick H.A."/>
            <person name="Posfai G."/>
            <person name="Hackett J."/>
            <person name="Klink S."/>
            <person name="Boutin A."/>
            <person name="Shao Y."/>
            <person name="Miller L."/>
            <person name="Grotbeck E.J."/>
            <person name="Davis N.W."/>
            <person name="Lim A."/>
            <person name="Dimalanta E.T."/>
            <person name="Potamousis K."/>
            <person name="Apodaca J."/>
            <person name="Anantharaman T.S."/>
            <person name="Lin J."/>
            <person name="Yen G."/>
            <person name="Schwartz D.C."/>
            <person name="Welch R.A."/>
            <person name="Blattner F.R."/>
        </authorList>
    </citation>
    <scope>NUCLEOTIDE SEQUENCE [LARGE SCALE GENOMIC DNA]</scope>
    <source>
        <strain>O157:H7 / EDL933 / ATCC 700927 / EHEC</strain>
    </source>
</reference>
<reference key="2">
    <citation type="journal article" date="2001" name="DNA Res.">
        <title>Complete genome sequence of enterohemorrhagic Escherichia coli O157:H7 and genomic comparison with a laboratory strain K-12.</title>
        <authorList>
            <person name="Hayashi T."/>
            <person name="Makino K."/>
            <person name="Ohnishi M."/>
            <person name="Kurokawa K."/>
            <person name="Ishii K."/>
            <person name="Yokoyama K."/>
            <person name="Han C.-G."/>
            <person name="Ohtsubo E."/>
            <person name="Nakayama K."/>
            <person name="Murata T."/>
            <person name="Tanaka M."/>
            <person name="Tobe T."/>
            <person name="Iida T."/>
            <person name="Takami H."/>
            <person name="Honda T."/>
            <person name="Sasakawa C."/>
            <person name="Ogasawara N."/>
            <person name="Yasunaga T."/>
            <person name="Kuhara S."/>
            <person name="Shiba T."/>
            <person name="Hattori M."/>
            <person name="Shinagawa H."/>
        </authorList>
    </citation>
    <scope>NUCLEOTIDE SEQUENCE [LARGE SCALE GENOMIC DNA]</scope>
    <source>
        <strain>O157:H7 / Sakai / RIMD 0509952 / EHEC</strain>
    </source>
</reference>
<accession>Q8X7R2</accession>
<dbReference type="EC" id="1.3.8.7" evidence="2"/>
<dbReference type="EC" id="1.3.8.8" evidence="2"/>
<dbReference type="EMBL" id="AE005174">
    <property type="protein sequence ID" value="AAG54546.1"/>
    <property type="status" value="ALT_INIT"/>
    <property type="molecule type" value="Genomic_DNA"/>
</dbReference>
<dbReference type="EMBL" id="BA000007">
    <property type="protein sequence ID" value="BAB33671.2"/>
    <property type="molecule type" value="Genomic_DNA"/>
</dbReference>
<dbReference type="PIR" id="F85510">
    <property type="entry name" value="F85510"/>
</dbReference>
<dbReference type="PIR" id="H90659">
    <property type="entry name" value="H90659"/>
</dbReference>
<dbReference type="RefSeq" id="NP_308275.2">
    <property type="nucleotide sequence ID" value="NC_002695.1"/>
</dbReference>
<dbReference type="RefSeq" id="WP_000973071.1">
    <property type="nucleotide sequence ID" value="NZ_VOAI01000020.1"/>
</dbReference>
<dbReference type="SMR" id="Q8X7R2"/>
<dbReference type="STRING" id="155864.Z0278"/>
<dbReference type="GeneID" id="914334"/>
<dbReference type="KEGG" id="ece:Z0278"/>
<dbReference type="KEGG" id="ecs:ECs_0248"/>
<dbReference type="PATRIC" id="fig|386585.9.peg.348"/>
<dbReference type="eggNOG" id="COG1960">
    <property type="taxonomic scope" value="Bacteria"/>
</dbReference>
<dbReference type="HOGENOM" id="CLU_012192_0_0_6"/>
<dbReference type="OMA" id="CDLANDW"/>
<dbReference type="UniPathway" id="UPA00659"/>
<dbReference type="Proteomes" id="UP000000558">
    <property type="component" value="Chromosome"/>
</dbReference>
<dbReference type="Proteomes" id="UP000002519">
    <property type="component" value="Chromosome"/>
</dbReference>
<dbReference type="GO" id="GO:0005737">
    <property type="term" value="C:cytoplasm"/>
    <property type="evidence" value="ECO:0007669"/>
    <property type="project" value="TreeGrafter"/>
</dbReference>
<dbReference type="GO" id="GO:0050660">
    <property type="term" value="F:flavin adenine dinucleotide binding"/>
    <property type="evidence" value="ECO:0007669"/>
    <property type="project" value="InterPro"/>
</dbReference>
<dbReference type="GO" id="GO:0004466">
    <property type="term" value="F:long-chain fatty acyl-CoA dehydrogenase activity"/>
    <property type="evidence" value="ECO:0007669"/>
    <property type="project" value="UniProtKB-EC"/>
</dbReference>
<dbReference type="GO" id="GO:0070991">
    <property type="term" value="F:medium-chain fatty acyl-CoA dehydrogenase activity"/>
    <property type="evidence" value="ECO:0007669"/>
    <property type="project" value="UniProtKB-EC"/>
</dbReference>
<dbReference type="GO" id="GO:0033539">
    <property type="term" value="P:fatty acid beta-oxidation using acyl-CoA dehydrogenase"/>
    <property type="evidence" value="ECO:0007669"/>
    <property type="project" value="InterPro"/>
</dbReference>
<dbReference type="FunFam" id="1.10.540.10:FF:000004">
    <property type="entry name" value="Acyl-CoA dehydrogenase"/>
    <property type="match status" value="1"/>
</dbReference>
<dbReference type="FunFam" id="1.20.140.10:FF:000009">
    <property type="entry name" value="Acyl-CoA dehydrogenase"/>
    <property type="match status" value="1"/>
</dbReference>
<dbReference type="FunFam" id="2.40.110.10:FF:000010">
    <property type="entry name" value="Acyl-CoA dehydrogenase"/>
    <property type="match status" value="1"/>
</dbReference>
<dbReference type="Gene3D" id="1.10.540.10">
    <property type="entry name" value="Acyl-CoA dehydrogenase/oxidase, N-terminal domain"/>
    <property type="match status" value="1"/>
</dbReference>
<dbReference type="Gene3D" id="2.40.110.10">
    <property type="entry name" value="Butyryl-CoA Dehydrogenase, subunit A, domain 2"/>
    <property type="match status" value="1"/>
</dbReference>
<dbReference type="Gene3D" id="1.20.140.10">
    <property type="entry name" value="Butyryl-CoA Dehydrogenase, subunit A, domain 3"/>
    <property type="match status" value="1"/>
</dbReference>
<dbReference type="InterPro" id="IPR050741">
    <property type="entry name" value="Acyl-CoA_dehydrogenase"/>
</dbReference>
<dbReference type="InterPro" id="IPR006091">
    <property type="entry name" value="Acyl-CoA_Oxase/DH_mid-dom"/>
</dbReference>
<dbReference type="InterPro" id="IPR046373">
    <property type="entry name" value="Acyl-CoA_Oxase/DH_mid-dom_sf"/>
</dbReference>
<dbReference type="InterPro" id="IPR036250">
    <property type="entry name" value="AcylCo_DH-like_C"/>
</dbReference>
<dbReference type="InterPro" id="IPR009075">
    <property type="entry name" value="AcylCo_DH/oxidase_C"/>
</dbReference>
<dbReference type="InterPro" id="IPR013786">
    <property type="entry name" value="AcylCoA_DH/ox_N"/>
</dbReference>
<dbReference type="InterPro" id="IPR037069">
    <property type="entry name" value="AcylCoA_DH/ox_N_sf"/>
</dbReference>
<dbReference type="InterPro" id="IPR009100">
    <property type="entry name" value="AcylCoA_DH/oxidase_NM_dom_sf"/>
</dbReference>
<dbReference type="InterPro" id="IPR047634">
    <property type="entry name" value="FadE"/>
</dbReference>
<dbReference type="InterPro" id="IPR015396">
    <property type="entry name" value="FadE_C"/>
</dbReference>
<dbReference type="NCBIfam" id="NF038187">
    <property type="entry name" value="FadE_coli"/>
    <property type="match status" value="1"/>
</dbReference>
<dbReference type="NCBIfam" id="NF007000">
    <property type="entry name" value="PRK09463.1"/>
    <property type="match status" value="1"/>
</dbReference>
<dbReference type="NCBIfam" id="NF009586">
    <property type="entry name" value="PRK13026.1"/>
    <property type="match status" value="1"/>
</dbReference>
<dbReference type="PANTHER" id="PTHR48083:SF18">
    <property type="entry name" value="ACYL-COENZYME A DEHYDROGENASE"/>
    <property type="match status" value="1"/>
</dbReference>
<dbReference type="PANTHER" id="PTHR48083">
    <property type="entry name" value="MEDIUM-CHAIN SPECIFIC ACYL-COA DEHYDROGENASE, MITOCHONDRIAL-RELATED"/>
    <property type="match status" value="1"/>
</dbReference>
<dbReference type="Pfam" id="PF09317">
    <property type="entry name" value="ACDH_C"/>
    <property type="match status" value="1"/>
</dbReference>
<dbReference type="Pfam" id="PF00441">
    <property type="entry name" value="Acyl-CoA_dh_1"/>
    <property type="match status" value="1"/>
</dbReference>
<dbReference type="Pfam" id="PF02770">
    <property type="entry name" value="Acyl-CoA_dh_M"/>
    <property type="match status" value="1"/>
</dbReference>
<dbReference type="Pfam" id="PF02771">
    <property type="entry name" value="Acyl-CoA_dh_N"/>
    <property type="match status" value="1"/>
</dbReference>
<dbReference type="SUPFAM" id="SSF47203">
    <property type="entry name" value="Acyl-CoA dehydrogenase C-terminal domain-like"/>
    <property type="match status" value="1"/>
</dbReference>
<dbReference type="SUPFAM" id="SSF56645">
    <property type="entry name" value="Acyl-CoA dehydrogenase NM domain-like"/>
    <property type="match status" value="1"/>
</dbReference>
<gene>
    <name type="primary">fadE</name>
    <name type="ordered locus">Z0278</name>
    <name type="ordered locus">ECs0248</name>
</gene>
<proteinExistence type="inferred from homology"/>
<evidence type="ECO:0000250" key="1">
    <source>
        <dbReference type="UniProtKB" id="P15651"/>
    </source>
</evidence>
<evidence type="ECO:0000250" key="2">
    <source>
        <dbReference type="UniProtKB" id="Q47146"/>
    </source>
</evidence>
<evidence type="ECO:0000305" key="3"/>
<comment type="function">
    <text evidence="2">Catalyzes the dehydrogenation of acyl-coenzymes A (acyl-CoAs) to 2-enoyl-CoAs, the first step of the beta-oxidation cycle of fatty acid degradation. Is required for the utilization of medium- and long-chain fatty acids as sole carbon sources for growth.</text>
</comment>
<comment type="catalytic activity">
    <reaction evidence="2">
        <text>a medium-chain 2,3-saturated fatty acyl-CoA + oxidized [electron-transfer flavoprotein] + H(+) = a medium-chain (2E)-enoyl-CoA + reduced [electron-transfer flavoprotein]</text>
        <dbReference type="Rhea" id="RHEA:14477"/>
        <dbReference type="Rhea" id="RHEA-COMP:10685"/>
        <dbReference type="Rhea" id="RHEA-COMP:10686"/>
        <dbReference type="ChEBI" id="CHEBI:15378"/>
        <dbReference type="ChEBI" id="CHEBI:57692"/>
        <dbReference type="ChEBI" id="CHEBI:58307"/>
        <dbReference type="ChEBI" id="CHEBI:83723"/>
        <dbReference type="ChEBI" id="CHEBI:83726"/>
        <dbReference type="EC" id="1.3.8.7"/>
    </reaction>
</comment>
<comment type="catalytic activity">
    <reaction evidence="2">
        <text>a long-chain 2,3-saturated fatty acyl-CoA + oxidized [electron-transfer flavoprotein] + H(+) = a long-chain (2E)-enoyl-CoA + reduced [electron-transfer flavoprotein]</text>
        <dbReference type="Rhea" id="RHEA:17721"/>
        <dbReference type="Rhea" id="RHEA-COMP:10685"/>
        <dbReference type="Rhea" id="RHEA-COMP:10686"/>
        <dbReference type="ChEBI" id="CHEBI:15378"/>
        <dbReference type="ChEBI" id="CHEBI:57692"/>
        <dbReference type="ChEBI" id="CHEBI:58307"/>
        <dbReference type="ChEBI" id="CHEBI:83721"/>
        <dbReference type="ChEBI" id="CHEBI:83727"/>
        <dbReference type="EC" id="1.3.8.8"/>
    </reaction>
</comment>
<comment type="cofactor">
    <cofactor evidence="1">
        <name>FAD</name>
        <dbReference type="ChEBI" id="CHEBI:57692"/>
    </cofactor>
</comment>
<comment type="pathway">
    <text evidence="2">Lipid metabolism; fatty acid beta-oxidation.</text>
</comment>
<comment type="similarity">
    <text evidence="3">Belongs to the acyl-CoA dehydrogenase family.</text>
</comment>
<comment type="sequence caution" evidence="3">
    <conflict type="erroneous initiation">
        <sequence resource="EMBL-CDS" id="AAG54546"/>
    </conflict>
    <text>Extended N-terminus.</text>
</comment>
<sequence length="814" mass="89181">MMILSILATVVLLGALFYHRVSLFISSLILLAWTAALGVAGLWSAWVLVPLAIILVPFNFAPMRKSMISAPVFRGFRKVMPPMSRTEKEAIDAGTTWWEGDLFQGKPDWKKLHNYPQPRLTAEEQAFLDGPVEEACRMANDFQITHELADLPPELWAYLKEHRFFAMIIKKEYGGLEFSAYAQSRVLQKLSGVSGILAITVGVPNSLGPGELLQHYGTDEQKDHYLPRLARGQEIPCFALTSPEAGSDAGAIPDTGIVCMGEWQGQQVLGMRLTWNKRYITLAPIATVLGLAFKLSDPEKLLGGAEDLGITCALIPTTTPGVEIGRRHFPLNVPFQNGPTLGKDVFVPIDYIIGGPKMAGQGWRMLVECLSVGRGITLPSNSTGGVKSVALATGAYAHIRRQFKISIGKMEGIEEPLARIAGNAYVMDAAASLITYGIMLGEKPAVLSAIVKYHCTHRGQQSIIDAMDITGGKGIMLGQSNFLARAYQGAPIAITVEGANILTRSMMIFGQGAIRCHPYVLEEMEAAKNNDVNVFDKLLFKHIGHVGSNKVRSFWLGLTRGLTSSTPTGDATKRYYQHLNRLSANLALLSDVSMAVLGGSLKRRERISARLGDILSQLYLASAVLKRYDDEGRNEADLPLVHWGVQDALYQAEQAMDDLLQNFPNRVVAGLLNVVIFPTGRHYLAPSDKLDHKVAKILQVPNATRSRIGRGQYLTPSEHNPVGLLEEALVDVIAADPIHQRICKELGKNLPFTRLDELAHNALAKGLIDKDEAAILVKAEESRLRSINVDDFDPEELATKPVKLPEKVRKVEAA</sequence>